<feature type="chain" id="PRO_0000169103" description="Uncharacterized protein YodC">
    <location>
        <begin position="1"/>
        <end position="60"/>
    </location>
</feature>
<sequence length="60" mass="6678">MSFMVSEEVTVKEGGPRMIVTGYSSGMVECRWYDGYGVKREAFHETELVPGEGSRSAEEV</sequence>
<reference key="1">
    <citation type="journal article" date="2001" name="Nature">
        <title>Genome sequence of enterohaemorrhagic Escherichia coli O157:H7.</title>
        <authorList>
            <person name="Perna N.T."/>
            <person name="Plunkett G. III"/>
            <person name="Burland V."/>
            <person name="Mau B."/>
            <person name="Glasner J.D."/>
            <person name="Rose D.J."/>
            <person name="Mayhew G.F."/>
            <person name="Evans P.S."/>
            <person name="Gregor J."/>
            <person name="Kirkpatrick H.A."/>
            <person name="Posfai G."/>
            <person name="Hackett J."/>
            <person name="Klink S."/>
            <person name="Boutin A."/>
            <person name="Shao Y."/>
            <person name="Miller L."/>
            <person name="Grotbeck E.J."/>
            <person name="Davis N.W."/>
            <person name="Lim A."/>
            <person name="Dimalanta E.T."/>
            <person name="Potamousis K."/>
            <person name="Apodaca J."/>
            <person name="Anantharaman T.S."/>
            <person name="Lin J."/>
            <person name="Yen G."/>
            <person name="Schwartz D.C."/>
            <person name="Welch R.A."/>
            <person name="Blattner F.R."/>
        </authorList>
    </citation>
    <scope>NUCLEOTIDE SEQUENCE [LARGE SCALE GENOMIC DNA]</scope>
    <source>
        <strain>O157:H7 / EDL933 / ATCC 700927 / EHEC</strain>
    </source>
</reference>
<reference key="2">
    <citation type="journal article" date="2001" name="DNA Res.">
        <title>Complete genome sequence of enterohemorrhagic Escherichia coli O157:H7 and genomic comparison with a laboratory strain K-12.</title>
        <authorList>
            <person name="Hayashi T."/>
            <person name="Makino K."/>
            <person name="Ohnishi M."/>
            <person name="Kurokawa K."/>
            <person name="Ishii K."/>
            <person name="Yokoyama K."/>
            <person name="Han C.-G."/>
            <person name="Ohtsubo E."/>
            <person name="Nakayama K."/>
            <person name="Murata T."/>
            <person name="Tanaka M."/>
            <person name="Tobe T."/>
            <person name="Iida T."/>
            <person name="Takami H."/>
            <person name="Honda T."/>
            <person name="Sasakawa C."/>
            <person name="Ogasawara N."/>
            <person name="Yasunaga T."/>
            <person name="Kuhara S."/>
            <person name="Shiba T."/>
            <person name="Hattori M."/>
            <person name="Shinagawa H."/>
        </authorList>
    </citation>
    <scope>NUCLEOTIDE SEQUENCE [LARGE SCALE GENOMIC DNA]</scope>
    <source>
        <strain>O157:H7 / Sakai / RIMD 0509952 / EHEC</strain>
    </source>
</reference>
<name>YODC_ECO57</name>
<gene>
    <name type="primary">yodC</name>
    <name type="ordered locus">Z3048</name>
    <name type="ordered locus">ECs2695</name>
</gene>
<accession>P64518</accession>
<accession>P76331</accession>
<dbReference type="EMBL" id="AE005174">
    <property type="protein sequence ID" value="AAG56971.1"/>
    <property type="molecule type" value="Genomic_DNA"/>
</dbReference>
<dbReference type="EMBL" id="BA000007">
    <property type="protein sequence ID" value="BAB36118.1"/>
    <property type="molecule type" value="Genomic_DNA"/>
</dbReference>
<dbReference type="PIR" id="G85813">
    <property type="entry name" value="G85813"/>
</dbReference>
<dbReference type="PIR" id="G90965">
    <property type="entry name" value="G90965"/>
</dbReference>
<dbReference type="RefSeq" id="NP_310722.1">
    <property type="nucleotide sequence ID" value="NC_002695.1"/>
</dbReference>
<dbReference type="RefSeq" id="WP_000009307.1">
    <property type="nucleotide sequence ID" value="NZ_VOAI01000028.1"/>
</dbReference>
<dbReference type="SMR" id="P64518"/>
<dbReference type="STRING" id="155864.Z3048"/>
<dbReference type="GeneID" id="913057"/>
<dbReference type="KEGG" id="ece:Z3048"/>
<dbReference type="KEGG" id="ecs:ECs_2695"/>
<dbReference type="PATRIC" id="fig|386585.9.peg.2824"/>
<dbReference type="eggNOG" id="COG5475">
    <property type="taxonomic scope" value="Bacteria"/>
</dbReference>
<dbReference type="HOGENOM" id="CLU_196663_0_0_6"/>
<dbReference type="OMA" id="RMVVTGY"/>
<dbReference type="Proteomes" id="UP000000558">
    <property type="component" value="Chromosome"/>
</dbReference>
<dbReference type="Proteomes" id="UP000002519">
    <property type="component" value="Chromosome"/>
</dbReference>
<dbReference type="InterPro" id="IPR019226">
    <property type="entry name" value="DUF2158"/>
</dbReference>
<dbReference type="Pfam" id="PF09926">
    <property type="entry name" value="DUF2158"/>
    <property type="match status" value="1"/>
</dbReference>
<proteinExistence type="predicted"/>
<protein>
    <recommendedName>
        <fullName>Uncharacterized protein YodC</fullName>
    </recommendedName>
</protein>
<organism>
    <name type="scientific">Escherichia coli O157:H7</name>
    <dbReference type="NCBI Taxonomy" id="83334"/>
    <lineage>
        <taxon>Bacteria</taxon>
        <taxon>Pseudomonadati</taxon>
        <taxon>Pseudomonadota</taxon>
        <taxon>Gammaproteobacteria</taxon>
        <taxon>Enterobacterales</taxon>
        <taxon>Enterobacteriaceae</taxon>
        <taxon>Escherichia</taxon>
    </lineage>
</organism>
<keyword id="KW-1185">Reference proteome</keyword>